<dbReference type="EC" id="1.13.11.27"/>
<dbReference type="EMBL" id="AF075724">
    <property type="protein sequence ID" value="AAC32843.1"/>
    <property type="molecule type" value="Genomic_DNA"/>
</dbReference>
<dbReference type="EMBL" id="AE017354">
    <property type="protein sequence ID" value="AAU28343.1"/>
    <property type="status" value="ALT_INIT"/>
    <property type="molecule type" value="Genomic_DNA"/>
</dbReference>
<dbReference type="RefSeq" id="YP_096290.1">
    <property type="nucleotide sequence ID" value="NC_002942.5"/>
</dbReference>
<dbReference type="SMR" id="Q5ZT84"/>
<dbReference type="STRING" id="272624.lpg2278"/>
<dbReference type="PaxDb" id="272624-lpg2278"/>
<dbReference type="KEGG" id="lpn:lpg2278"/>
<dbReference type="PATRIC" id="fig|272624.6.peg.2395"/>
<dbReference type="eggNOG" id="COG3185">
    <property type="taxonomic scope" value="Bacteria"/>
</dbReference>
<dbReference type="HOGENOM" id="CLU_034004_1_0_6"/>
<dbReference type="OrthoDB" id="9780241at2"/>
<dbReference type="Proteomes" id="UP000000609">
    <property type="component" value="Chromosome"/>
</dbReference>
<dbReference type="GO" id="GO:0003868">
    <property type="term" value="F:4-hydroxyphenylpyruvate dioxygenase activity"/>
    <property type="evidence" value="ECO:0007669"/>
    <property type="project" value="UniProtKB-EC"/>
</dbReference>
<dbReference type="GO" id="GO:0046872">
    <property type="term" value="F:metal ion binding"/>
    <property type="evidence" value="ECO:0007669"/>
    <property type="project" value="UniProtKB-KW"/>
</dbReference>
<dbReference type="GO" id="GO:0090729">
    <property type="term" value="F:toxin activity"/>
    <property type="evidence" value="ECO:0007669"/>
    <property type="project" value="UniProtKB-KW"/>
</dbReference>
<dbReference type="GO" id="GO:0031640">
    <property type="term" value="P:killing of cells of another organism"/>
    <property type="evidence" value="ECO:0007669"/>
    <property type="project" value="UniProtKB-KW"/>
</dbReference>
<dbReference type="GO" id="GO:0006572">
    <property type="term" value="P:tyrosine catabolic process"/>
    <property type="evidence" value="ECO:0007669"/>
    <property type="project" value="TreeGrafter"/>
</dbReference>
<dbReference type="CDD" id="cd07250">
    <property type="entry name" value="HPPD_C_like"/>
    <property type="match status" value="1"/>
</dbReference>
<dbReference type="CDD" id="cd08342">
    <property type="entry name" value="HPPD_N_like"/>
    <property type="match status" value="1"/>
</dbReference>
<dbReference type="FunFam" id="3.10.180.10:FF:000007">
    <property type="entry name" value="4-hydroxyphenylpyruvate dioxygenase"/>
    <property type="match status" value="1"/>
</dbReference>
<dbReference type="Gene3D" id="3.10.180.10">
    <property type="entry name" value="2,3-Dihydroxybiphenyl 1,2-Dioxygenase, domain 1"/>
    <property type="match status" value="2"/>
</dbReference>
<dbReference type="InterPro" id="IPR005956">
    <property type="entry name" value="4OHPhenylPyrv_dOase"/>
</dbReference>
<dbReference type="InterPro" id="IPR041735">
    <property type="entry name" value="4OHPhenylPyrv_dOase_C"/>
</dbReference>
<dbReference type="InterPro" id="IPR041736">
    <property type="entry name" value="4OHPhenylPyrv_dOase_N"/>
</dbReference>
<dbReference type="InterPro" id="IPR029068">
    <property type="entry name" value="Glyas_Bleomycin-R_OHBP_Dase"/>
</dbReference>
<dbReference type="InterPro" id="IPR004360">
    <property type="entry name" value="Glyas_Fos-R_dOase_dom"/>
</dbReference>
<dbReference type="InterPro" id="IPR037523">
    <property type="entry name" value="VOC"/>
</dbReference>
<dbReference type="NCBIfam" id="TIGR01263">
    <property type="entry name" value="4HPPD"/>
    <property type="match status" value="1"/>
</dbReference>
<dbReference type="PANTHER" id="PTHR11959">
    <property type="entry name" value="4-HYDROXYPHENYLPYRUVATE DIOXYGENASE"/>
    <property type="match status" value="1"/>
</dbReference>
<dbReference type="PANTHER" id="PTHR11959:SF1">
    <property type="entry name" value="4-HYDROXYPHENYLPYRUVATE DIOXYGENASE"/>
    <property type="match status" value="1"/>
</dbReference>
<dbReference type="Pfam" id="PF00903">
    <property type="entry name" value="Glyoxalase"/>
    <property type="match status" value="1"/>
</dbReference>
<dbReference type="Pfam" id="PF14696">
    <property type="entry name" value="Glyoxalase_5"/>
    <property type="match status" value="1"/>
</dbReference>
<dbReference type="PIRSF" id="PIRSF009283">
    <property type="entry name" value="HPP_dOase"/>
    <property type="match status" value="1"/>
</dbReference>
<dbReference type="SUPFAM" id="SSF54593">
    <property type="entry name" value="Glyoxalase/Bleomycin resistance protein/Dihydroxybiphenyl dioxygenase"/>
    <property type="match status" value="1"/>
</dbReference>
<dbReference type="PROSITE" id="PS51819">
    <property type="entry name" value="VOC"/>
    <property type="match status" value="2"/>
</dbReference>
<accession>Q5ZT84</accession>
<accession>Q53407</accession>
<keyword id="KW-0204">Cytolysis</keyword>
<keyword id="KW-0223">Dioxygenase</keyword>
<keyword id="KW-0903">Direct protein sequencing</keyword>
<keyword id="KW-0354">Hemolysis</keyword>
<keyword id="KW-0408">Iron</keyword>
<keyword id="KW-0479">Metal-binding</keyword>
<keyword id="KW-0560">Oxidoreductase</keyword>
<keyword id="KW-1185">Reference proteome</keyword>
<keyword id="KW-0677">Repeat</keyword>
<keyword id="KW-0800">Toxin</keyword>
<keyword id="KW-0843">Virulence</keyword>
<comment type="function">
    <text>Catalyzes the transformation of p-hydroxyphenylpyruvate into HGA. Has hemolytic and brown pigment production activity.</text>
</comment>
<comment type="catalytic activity">
    <reaction>
        <text>3-(4-hydroxyphenyl)pyruvate + O2 = homogentisate + CO2</text>
        <dbReference type="Rhea" id="RHEA:16189"/>
        <dbReference type="ChEBI" id="CHEBI:15379"/>
        <dbReference type="ChEBI" id="CHEBI:16169"/>
        <dbReference type="ChEBI" id="CHEBI:16526"/>
        <dbReference type="ChEBI" id="CHEBI:36242"/>
        <dbReference type="EC" id="1.13.11.27"/>
    </reaction>
</comment>
<comment type="cofactor">
    <cofactor evidence="1">
        <name>Fe cation</name>
        <dbReference type="ChEBI" id="CHEBI:24875"/>
    </cofactor>
    <text evidence="1">Binds 1 Fe cation per subunit.</text>
</comment>
<comment type="similarity">
    <text evidence="3">Belongs to the 4HPPD family.</text>
</comment>
<comment type="sequence caution" evidence="3">
    <conflict type="erroneous initiation">
        <sequence resource="EMBL-CDS" id="AAU28343"/>
    </conflict>
</comment>
<protein>
    <recommendedName>
        <fullName>4-hydroxyphenylpyruvate dioxygenase</fullName>
        <shortName>4HPPD</shortName>
        <shortName>HPD</shortName>
        <shortName>HPPDase</shortName>
        <ecNumber>1.13.11.27</ecNumber>
    </recommendedName>
    <alternativeName>
        <fullName>Legiolysin</fullName>
    </alternativeName>
</protein>
<feature type="chain" id="PRO_0000088412" description="4-hydroxyphenylpyruvate dioxygenase">
    <location>
        <begin position="1"/>
        <end position="348"/>
    </location>
</feature>
<feature type="domain" description="VOC 1" evidence="2">
    <location>
        <begin position="11"/>
        <end position="141"/>
    </location>
</feature>
<feature type="domain" description="VOC 2" evidence="2">
    <location>
        <begin position="151"/>
        <end position="303"/>
    </location>
</feature>
<feature type="binding site" evidence="1">
    <location>
        <position position="154"/>
    </location>
    <ligand>
        <name>Fe cation</name>
        <dbReference type="ChEBI" id="CHEBI:24875"/>
    </ligand>
</feature>
<feature type="binding site" evidence="1">
    <location>
        <position position="232"/>
    </location>
    <ligand>
        <name>Fe cation</name>
        <dbReference type="ChEBI" id="CHEBI:24875"/>
    </ligand>
</feature>
<feature type="binding site" evidence="1">
    <location>
        <position position="312"/>
    </location>
    <ligand>
        <name>Fe cation</name>
        <dbReference type="ChEBI" id="CHEBI:24875"/>
    </ligand>
</feature>
<sequence>MQNNNPCGLDGFAFLEFSGPDRNKLHQQFSEMGFQAVAHHKNQDITLFKQGEIQFIVNAASHCQAEAHASTHGPGACAMGFKVKDAKAAFQHAIAHGGIAFQDAPHANHGLPAIQAIGGSVIYFVDEEHQPFSHEWNITSPEPVVGNGLTAIDHLTHNVYRGNMDKWASFYASIFNFQEIRFFNIKGKMTGLVSRALGSPCGKIKIPLNESKDDLSQIEEFLHEYHGEGIQHIALNTNDIYKTVNGLRKQGVKFLDVPDTYYEMINDRLPWHKEPLNQLHAEKILIDGEADPKDGLLLQIFTENIFGPVFFEIIQRKGNQGFGEGNFQALFEAIERDQVRRGTLKELS</sequence>
<proteinExistence type="evidence at protein level"/>
<name>LLY_LEGPH</name>
<evidence type="ECO:0000250" key="1"/>
<evidence type="ECO:0000255" key="2">
    <source>
        <dbReference type="PROSITE-ProRule" id="PRU01163"/>
    </source>
</evidence>
<evidence type="ECO:0000305" key="3"/>
<organism>
    <name type="scientific">Legionella pneumophila subsp. pneumophila (strain Philadelphia 1 / ATCC 33152 / DSM 7513)</name>
    <dbReference type="NCBI Taxonomy" id="272624"/>
    <lineage>
        <taxon>Bacteria</taxon>
        <taxon>Pseudomonadati</taxon>
        <taxon>Pseudomonadota</taxon>
        <taxon>Gammaproteobacteria</taxon>
        <taxon>Legionellales</taxon>
        <taxon>Legionellaceae</taxon>
        <taxon>Legionella</taxon>
    </lineage>
</organism>
<gene>
    <name type="primary">lly</name>
    <name type="synonym">hpd</name>
    <name type="ordered locus">lpg2278</name>
</gene>
<reference key="1">
    <citation type="journal article" date="1994" name="Infect. Immun.">
        <title>Sequence determination and mutational analysis of the lly locus of Legionella pneumophila.</title>
        <authorList>
            <person name="Wintermeyer E."/>
            <person name="Flugel M."/>
            <person name="Ott M."/>
            <person name="Steinert M."/>
            <person name="Rdest U."/>
            <person name="Mann K.H."/>
            <person name="Hacker J."/>
        </authorList>
    </citation>
    <scope>NUCLEOTIDE SEQUENCE [GENOMIC DNA]</scope>
    <scope>PARTIAL PROTEIN SEQUENCE</scope>
</reference>
<reference key="2">
    <citation type="submission" date="1998-07" db="EMBL/GenBank/DDBJ databases">
        <title>Homogentisic acid is a product of the p-hydroxyphenylpyruvate dioxygenase activity of the Lly-protein, which mediates melanogenesis in Legionella pneumophila.</title>
        <authorList>
            <person name="Flugel M."/>
            <person name="Steinert M."/>
            <person name="Wintermeyer E."/>
            <person name="Supriyono A."/>
            <person name="Proksch P."/>
            <person name="Hacker J."/>
        </authorList>
    </citation>
    <scope>SEQUENCE REVISION TO 94</scope>
    <scope>CHARACTERIZATION</scope>
</reference>
<reference key="3">
    <citation type="journal article" date="2004" name="Science">
        <title>The genomic sequence of the accidental pathogen Legionella pneumophila.</title>
        <authorList>
            <person name="Chien M."/>
            <person name="Morozova I."/>
            <person name="Shi S."/>
            <person name="Sheng H."/>
            <person name="Chen J."/>
            <person name="Gomez S.M."/>
            <person name="Asamani G."/>
            <person name="Hill K."/>
            <person name="Nuara J."/>
            <person name="Feder M."/>
            <person name="Rineer J."/>
            <person name="Greenberg J.J."/>
            <person name="Steshenko V."/>
            <person name="Park S.H."/>
            <person name="Zhao B."/>
            <person name="Teplitskaya E."/>
            <person name="Edwards J.R."/>
            <person name="Pampou S."/>
            <person name="Georghiou A."/>
            <person name="Chou I.-C."/>
            <person name="Iannuccilli W."/>
            <person name="Ulz M.E."/>
            <person name="Kim D.H."/>
            <person name="Geringer-Sameth A."/>
            <person name="Goldsberry C."/>
            <person name="Morozov P."/>
            <person name="Fischer S.G."/>
            <person name="Segal G."/>
            <person name="Qu X."/>
            <person name="Rzhetsky A."/>
            <person name="Zhang P."/>
            <person name="Cayanis E."/>
            <person name="De Jong P.J."/>
            <person name="Ju J."/>
            <person name="Kalachikov S."/>
            <person name="Shuman H.A."/>
            <person name="Russo J.J."/>
        </authorList>
    </citation>
    <scope>NUCLEOTIDE SEQUENCE [LARGE SCALE GENOMIC DNA]</scope>
    <source>
        <strain>Philadelphia 1 / ATCC 33152 / DSM 7513</strain>
    </source>
</reference>